<keyword id="KW-0143">Chaperone</keyword>
<keyword id="KW-0963">Cytoplasm</keyword>
<keyword id="KW-0235">DNA replication</keyword>
<keyword id="KW-0479">Metal-binding</keyword>
<keyword id="KW-0677">Repeat</keyword>
<keyword id="KW-0346">Stress response</keyword>
<keyword id="KW-0862">Zinc</keyword>
<keyword id="KW-0863">Zinc-finger</keyword>
<dbReference type="EMBL" id="Y17157">
    <property type="protein sequence ID" value="CAA76664.1"/>
    <property type="molecule type" value="Genomic_DNA"/>
</dbReference>
<dbReference type="SMR" id="O69269"/>
<dbReference type="STRING" id="1421.A2J09_11480"/>
<dbReference type="GO" id="GO:0005737">
    <property type="term" value="C:cytoplasm"/>
    <property type="evidence" value="ECO:0007669"/>
    <property type="project" value="UniProtKB-SubCell"/>
</dbReference>
<dbReference type="GO" id="GO:0005524">
    <property type="term" value="F:ATP binding"/>
    <property type="evidence" value="ECO:0007669"/>
    <property type="project" value="InterPro"/>
</dbReference>
<dbReference type="GO" id="GO:0031072">
    <property type="term" value="F:heat shock protein binding"/>
    <property type="evidence" value="ECO:0007669"/>
    <property type="project" value="InterPro"/>
</dbReference>
<dbReference type="GO" id="GO:0051082">
    <property type="term" value="F:unfolded protein binding"/>
    <property type="evidence" value="ECO:0007669"/>
    <property type="project" value="UniProtKB-UniRule"/>
</dbReference>
<dbReference type="GO" id="GO:0008270">
    <property type="term" value="F:zinc ion binding"/>
    <property type="evidence" value="ECO:0007669"/>
    <property type="project" value="UniProtKB-UniRule"/>
</dbReference>
<dbReference type="GO" id="GO:0051085">
    <property type="term" value="P:chaperone cofactor-dependent protein refolding"/>
    <property type="evidence" value="ECO:0007669"/>
    <property type="project" value="TreeGrafter"/>
</dbReference>
<dbReference type="GO" id="GO:0006260">
    <property type="term" value="P:DNA replication"/>
    <property type="evidence" value="ECO:0007669"/>
    <property type="project" value="UniProtKB-KW"/>
</dbReference>
<dbReference type="GO" id="GO:0042026">
    <property type="term" value="P:protein refolding"/>
    <property type="evidence" value="ECO:0007669"/>
    <property type="project" value="TreeGrafter"/>
</dbReference>
<dbReference type="GO" id="GO:0009408">
    <property type="term" value="P:response to heat"/>
    <property type="evidence" value="ECO:0007669"/>
    <property type="project" value="InterPro"/>
</dbReference>
<dbReference type="CDD" id="cd06257">
    <property type="entry name" value="DnaJ"/>
    <property type="match status" value="1"/>
</dbReference>
<dbReference type="CDD" id="cd10747">
    <property type="entry name" value="DnaJ_C"/>
    <property type="match status" value="1"/>
</dbReference>
<dbReference type="CDD" id="cd10719">
    <property type="entry name" value="DnaJ_zf"/>
    <property type="match status" value="1"/>
</dbReference>
<dbReference type="FunFam" id="1.10.287.110:FF:000031">
    <property type="entry name" value="Molecular chaperone DnaJ"/>
    <property type="match status" value="1"/>
</dbReference>
<dbReference type="FunFam" id="2.10.230.10:FF:000002">
    <property type="entry name" value="Molecular chaperone DnaJ"/>
    <property type="match status" value="1"/>
</dbReference>
<dbReference type="FunFam" id="2.60.260.20:FF:000004">
    <property type="entry name" value="Molecular chaperone DnaJ"/>
    <property type="match status" value="1"/>
</dbReference>
<dbReference type="FunFam" id="2.60.260.20:FF:000009">
    <property type="entry name" value="Putative Mitochondrial DnaJ chaperone"/>
    <property type="match status" value="1"/>
</dbReference>
<dbReference type="Gene3D" id="1.10.287.110">
    <property type="entry name" value="DnaJ domain"/>
    <property type="match status" value="1"/>
</dbReference>
<dbReference type="Gene3D" id="2.10.230.10">
    <property type="entry name" value="Heat shock protein DnaJ, cysteine-rich domain"/>
    <property type="match status" value="1"/>
</dbReference>
<dbReference type="Gene3D" id="2.60.260.20">
    <property type="entry name" value="Urease metallochaperone UreE, N-terminal domain"/>
    <property type="match status" value="2"/>
</dbReference>
<dbReference type="HAMAP" id="MF_01152">
    <property type="entry name" value="DnaJ"/>
    <property type="match status" value="1"/>
</dbReference>
<dbReference type="InterPro" id="IPR012724">
    <property type="entry name" value="DnaJ"/>
</dbReference>
<dbReference type="InterPro" id="IPR002939">
    <property type="entry name" value="DnaJ_C"/>
</dbReference>
<dbReference type="InterPro" id="IPR001623">
    <property type="entry name" value="DnaJ_domain"/>
</dbReference>
<dbReference type="InterPro" id="IPR018253">
    <property type="entry name" value="DnaJ_domain_CS"/>
</dbReference>
<dbReference type="InterPro" id="IPR008971">
    <property type="entry name" value="HSP40/DnaJ_pept-bd"/>
</dbReference>
<dbReference type="InterPro" id="IPR001305">
    <property type="entry name" value="HSP_DnaJ_Cys-rich_dom"/>
</dbReference>
<dbReference type="InterPro" id="IPR036410">
    <property type="entry name" value="HSP_DnaJ_Cys-rich_dom_sf"/>
</dbReference>
<dbReference type="InterPro" id="IPR036869">
    <property type="entry name" value="J_dom_sf"/>
</dbReference>
<dbReference type="NCBIfam" id="TIGR02349">
    <property type="entry name" value="DnaJ_bact"/>
    <property type="match status" value="1"/>
</dbReference>
<dbReference type="NCBIfam" id="NF008035">
    <property type="entry name" value="PRK10767.1"/>
    <property type="match status" value="1"/>
</dbReference>
<dbReference type="NCBIfam" id="NF010869">
    <property type="entry name" value="PRK14276.1"/>
    <property type="match status" value="1"/>
</dbReference>
<dbReference type="NCBIfam" id="NF010873">
    <property type="entry name" value="PRK14280.1"/>
    <property type="match status" value="1"/>
</dbReference>
<dbReference type="PANTHER" id="PTHR43096:SF48">
    <property type="entry name" value="CHAPERONE PROTEIN DNAJ"/>
    <property type="match status" value="1"/>
</dbReference>
<dbReference type="PANTHER" id="PTHR43096">
    <property type="entry name" value="DNAJ HOMOLOG 1, MITOCHONDRIAL-RELATED"/>
    <property type="match status" value="1"/>
</dbReference>
<dbReference type="Pfam" id="PF00226">
    <property type="entry name" value="DnaJ"/>
    <property type="match status" value="1"/>
</dbReference>
<dbReference type="Pfam" id="PF01556">
    <property type="entry name" value="DnaJ_C"/>
    <property type="match status" value="1"/>
</dbReference>
<dbReference type="Pfam" id="PF00684">
    <property type="entry name" value="DnaJ_CXXCXGXG"/>
    <property type="match status" value="1"/>
</dbReference>
<dbReference type="PRINTS" id="PR00625">
    <property type="entry name" value="JDOMAIN"/>
</dbReference>
<dbReference type="SMART" id="SM00271">
    <property type="entry name" value="DnaJ"/>
    <property type="match status" value="1"/>
</dbReference>
<dbReference type="SUPFAM" id="SSF46565">
    <property type="entry name" value="Chaperone J-domain"/>
    <property type="match status" value="1"/>
</dbReference>
<dbReference type="SUPFAM" id="SSF57938">
    <property type="entry name" value="DnaJ/Hsp40 cysteine-rich domain"/>
    <property type="match status" value="1"/>
</dbReference>
<dbReference type="SUPFAM" id="SSF49493">
    <property type="entry name" value="HSP40/DnaJ peptide-binding domain"/>
    <property type="match status" value="2"/>
</dbReference>
<dbReference type="PROSITE" id="PS00636">
    <property type="entry name" value="DNAJ_1"/>
    <property type="match status" value="1"/>
</dbReference>
<dbReference type="PROSITE" id="PS50076">
    <property type="entry name" value="DNAJ_2"/>
    <property type="match status" value="1"/>
</dbReference>
<dbReference type="PROSITE" id="PS51188">
    <property type="entry name" value="ZF_CR"/>
    <property type="match status" value="1"/>
</dbReference>
<protein>
    <recommendedName>
        <fullName evidence="1">Chaperone protein DnaJ</fullName>
    </recommendedName>
</protein>
<evidence type="ECO:0000255" key="1">
    <source>
        <dbReference type="HAMAP-Rule" id="MF_01152"/>
    </source>
</evidence>
<reference key="1">
    <citation type="submission" date="1998-04" db="EMBL/GenBank/DDBJ databases">
        <authorList>
            <person name="Ahmad S."/>
            <person name="Selvapandiyan A."/>
            <person name="Gasbarri M."/>
            <person name="Bhatnagar R.K."/>
        </authorList>
    </citation>
    <scope>NUCLEOTIDE SEQUENCE [GENOMIC DNA]</scope>
    <source>
        <strain>ATCC 33203 / 1593</strain>
    </source>
</reference>
<sequence>MEKRDYYEVLGLTKDEIKKAYRKLSKQYHPDLNKEPGADEKFKEIAEAYEVLSDDQKKARYDQFGHEDPNAGFGGGFGGGGFGGFEDIFSSFFGGGGRRQDPNAPRKGDDLQYRMNIKFEEAIFGKETEIEIPKDETCETCHGSGAKPGTQPETCSTCNGAGQINQAVDTPFGRMMNRRSCTTCHGTGKIIKEKCSTCRGEGKVQKRKKIKVSIPAGVDDGQQIRVSGQGEPGINGGPAGDLYIMFRVQGHNDFERDGDDIYFELKLTFPQAALGDEIEVPTVHGKVKLRIPAGTQSGAQFRLKDKGVKNVHGYGMGNQYVTVKVMTPEKLTEKQKQLLREFAEISGDIPEEQGSSLFDKIKKKFQGE</sequence>
<comment type="function">
    <text evidence="1">Participates actively in the response to hyperosmotic and heat shock by preventing the aggregation of stress-denatured proteins and by disaggregating proteins, also in an autonomous, DnaK-independent fashion. Unfolded proteins bind initially to DnaJ; upon interaction with the DnaJ-bound protein, DnaK hydrolyzes its bound ATP, resulting in the formation of a stable complex. GrpE releases ADP from DnaK; ATP binding to DnaK triggers the release of the substrate protein, thus completing the reaction cycle. Several rounds of ATP-dependent interactions between DnaJ, DnaK and GrpE are required for fully efficient folding. Also involved, together with DnaK and GrpE, in the DNA replication of plasmids through activation of initiation proteins.</text>
</comment>
<comment type="cofactor">
    <cofactor evidence="1">
        <name>Zn(2+)</name>
        <dbReference type="ChEBI" id="CHEBI:29105"/>
    </cofactor>
    <text evidence="1">Binds 2 Zn(2+) ions per monomer.</text>
</comment>
<comment type="subunit">
    <text evidence="1">Homodimer.</text>
</comment>
<comment type="subcellular location">
    <subcellularLocation>
        <location evidence="1">Cytoplasm</location>
    </subcellularLocation>
</comment>
<comment type="domain">
    <text evidence="1">The J domain is necessary and sufficient to stimulate DnaK ATPase activity. Zinc center 1 plays an important role in the autonomous, DnaK-independent chaperone activity of DnaJ. Zinc center 2 is essential for interaction with DnaK and for DnaJ activity.</text>
</comment>
<comment type="similarity">
    <text evidence="1">Belongs to the DnaJ family.</text>
</comment>
<organism>
    <name type="scientific">Lysinibacillus sphaericus</name>
    <name type="common">Bacillus sphaericus</name>
    <dbReference type="NCBI Taxonomy" id="1421"/>
    <lineage>
        <taxon>Bacteria</taxon>
        <taxon>Bacillati</taxon>
        <taxon>Bacillota</taxon>
        <taxon>Bacilli</taxon>
        <taxon>Bacillales</taxon>
        <taxon>Bacillaceae</taxon>
        <taxon>Lysinibacillus</taxon>
    </lineage>
</organism>
<accession>O69269</accession>
<feature type="chain" id="PRO_0000070725" description="Chaperone protein DnaJ">
    <location>
        <begin position="1"/>
        <end position="368"/>
    </location>
</feature>
<feature type="domain" description="J" evidence="1">
    <location>
        <begin position="5"/>
        <end position="65"/>
    </location>
</feature>
<feature type="repeat" description="CXXCXGXG motif">
    <location>
        <begin position="138"/>
        <end position="145"/>
    </location>
</feature>
<feature type="repeat" description="CXXCXGXG motif">
    <location>
        <begin position="155"/>
        <end position="162"/>
    </location>
</feature>
<feature type="repeat" description="CXXCXGXG motif">
    <location>
        <begin position="181"/>
        <end position="188"/>
    </location>
</feature>
<feature type="repeat" description="CXXCXGXG motif">
    <location>
        <begin position="195"/>
        <end position="202"/>
    </location>
</feature>
<feature type="zinc finger region" description="CR-type" evidence="1">
    <location>
        <begin position="125"/>
        <end position="207"/>
    </location>
</feature>
<feature type="binding site" evidence="1">
    <location>
        <position position="138"/>
    </location>
    <ligand>
        <name>Zn(2+)</name>
        <dbReference type="ChEBI" id="CHEBI:29105"/>
        <label>1</label>
    </ligand>
</feature>
<feature type="binding site" evidence="1">
    <location>
        <position position="141"/>
    </location>
    <ligand>
        <name>Zn(2+)</name>
        <dbReference type="ChEBI" id="CHEBI:29105"/>
        <label>1</label>
    </ligand>
</feature>
<feature type="binding site" evidence="1">
    <location>
        <position position="155"/>
    </location>
    <ligand>
        <name>Zn(2+)</name>
        <dbReference type="ChEBI" id="CHEBI:29105"/>
        <label>2</label>
    </ligand>
</feature>
<feature type="binding site" evidence="1">
    <location>
        <position position="158"/>
    </location>
    <ligand>
        <name>Zn(2+)</name>
        <dbReference type="ChEBI" id="CHEBI:29105"/>
        <label>2</label>
    </ligand>
</feature>
<feature type="binding site" evidence="1">
    <location>
        <position position="181"/>
    </location>
    <ligand>
        <name>Zn(2+)</name>
        <dbReference type="ChEBI" id="CHEBI:29105"/>
        <label>2</label>
    </ligand>
</feature>
<feature type="binding site" evidence="1">
    <location>
        <position position="184"/>
    </location>
    <ligand>
        <name>Zn(2+)</name>
        <dbReference type="ChEBI" id="CHEBI:29105"/>
        <label>2</label>
    </ligand>
</feature>
<feature type="binding site" evidence="1">
    <location>
        <position position="195"/>
    </location>
    <ligand>
        <name>Zn(2+)</name>
        <dbReference type="ChEBI" id="CHEBI:29105"/>
        <label>1</label>
    </ligand>
</feature>
<feature type="binding site" evidence="1">
    <location>
        <position position="198"/>
    </location>
    <ligand>
        <name>Zn(2+)</name>
        <dbReference type="ChEBI" id="CHEBI:29105"/>
        <label>1</label>
    </ligand>
</feature>
<proteinExistence type="inferred from homology"/>
<name>DNAJ_LYSSH</name>
<gene>
    <name evidence="1" type="primary">dnaJ</name>
</gene>